<protein>
    <recommendedName>
        <fullName>Torsin-1B</fullName>
    </recommendedName>
    <alternativeName>
        <fullName>Torsin ATPase-1B</fullName>
        <ecNumber>3.6.4.-</ecNumber>
    </alternativeName>
    <alternativeName>
        <fullName>Torsin family 1 member B</fullName>
    </alternativeName>
</protein>
<gene>
    <name type="primary">Tor1b</name>
</gene>
<reference key="1">
    <citation type="submission" date="2000-10" db="EMBL/GenBank/DDBJ databases">
        <title>Characterization of the mouse torsinA gene.</title>
        <authorList>
            <person name="Kuner R."/>
            <person name="Teismann P."/>
            <person name="Trutzel A."/>
            <person name="Naim J."/>
            <person name="Richter A."/>
            <person name="Bach A."/>
            <person name="Ferger B."/>
            <person name="Schneider A."/>
        </authorList>
    </citation>
    <scope>NUCLEOTIDE SEQUENCE [MRNA]</scope>
    <source>
        <tissue>Brain</tissue>
    </source>
</reference>
<reference key="2">
    <citation type="journal article" date="2005" name="Science">
        <title>The transcriptional landscape of the mammalian genome.</title>
        <authorList>
            <person name="Carninci P."/>
            <person name="Kasukawa T."/>
            <person name="Katayama S."/>
            <person name="Gough J."/>
            <person name="Frith M.C."/>
            <person name="Maeda N."/>
            <person name="Oyama R."/>
            <person name="Ravasi T."/>
            <person name="Lenhard B."/>
            <person name="Wells C."/>
            <person name="Kodzius R."/>
            <person name="Shimokawa K."/>
            <person name="Bajic V.B."/>
            <person name="Brenner S.E."/>
            <person name="Batalov S."/>
            <person name="Forrest A.R."/>
            <person name="Zavolan M."/>
            <person name="Davis M.J."/>
            <person name="Wilming L.G."/>
            <person name="Aidinis V."/>
            <person name="Allen J.E."/>
            <person name="Ambesi-Impiombato A."/>
            <person name="Apweiler R."/>
            <person name="Aturaliya R.N."/>
            <person name="Bailey T.L."/>
            <person name="Bansal M."/>
            <person name="Baxter L."/>
            <person name="Beisel K.W."/>
            <person name="Bersano T."/>
            <person name="Bono H."/>
            <person name="Chalk A.M."/>
            <person name="Chiu K.P."/>
            <person name="Choudhary V."/>
            <person name="Christoffels A."/>
            <person name="Clutterbuck D.R."/>
            <person name="Crowe M.L."/>
            <person name="Dalla E."/>
            <person name="Dalrymple B.P."/>
            <person name="de Bono B."/>
            <person name="Della Gatta G."/>
            <person name="di Bernardo D."/>
            <person name="Down T."/>
            <person name="Engstrom P."/>
            <person name="Fagiolini M."/>
            <person name="Faulkner G."/>
            <person name="Fletcher C.F."/>
            <person name="Fukushima T."/>
            <person name="Furuno M."/>
            <person name="Futaki S."/>
            <person name="Gariboldi M."/>
            <person name="Georgii-Hemming P."/>
            <person name="Gingeras T.R."/>
            <person name="Gojobori T."/>
            <person name="Green R.E."/>
            <person name="Gustincich S."/>
            <person name="Harbers M."/>
            <person name="Hayashi Y."/>
            <person name="Hensch T.K."/>
            <person name="Hirokawa N."/>
            <person name="Hill D."/>
            <person name="Huminiecki L."/>
            <person name="Iacono M."/>
            <person name="Ikeo K."/>
            <person name="Iwama A."/>
            <person name="Ishikawa T."/>
            <person name="Jakt M."/>
            <person name="Kanapin A."/>
            <person name="Katoh M."/>
            <person name="Kawasawa Y."/>
            <person name="Kelso J."/>
            <person name="Kitamura H."/>
            <person name="Kitano H."/>
            <person name="Kollias G."/>
            <person name="Krishnan S.P."/>
            <person name="Kruger A."/>
            <person name="Kummerfeld S.K."/>
            <person name="Kurochkin I.V."/>
            <person name="Lareau L.F."/>
            <person name="Lazarevic D."/>
            <person name="Lipovich L."/>
            <person name="Liu J."/>
            <person name="Liuni S."/>
            <person name="McWilliam S."/>
            <person name="Madan Babu M."/>
            <person name="Madera M."/>
            <person name="Marchionni L."/>
            <person name="Matsuda H."/>
            <person name="Matsuzawa S."/>
            <person name="Miki H."/>
            <person name="Mignone F."/>
            <person name="Miyake S."/>
            <person name="Morris K."/>
            <person name="Mottagui-Tabar S."/>
            <person name="Mulder N."/>
            <person name="Nakano N."/>
            <person name="Nakauchi H."/>
            <person name="Ng P."/>
            <person name="Nilsson R."/>
            <person name="Nishiguchi S."/>
            <person name="Nishikawa S."/>
            <person name="Nori F."/>
            <person name="Ohara O."/>
            <person name="Okazaki Y."/>
            <person name="Orlando V."/>
            <person name="Pang K.C."/>
            <person name="Pavan W.J."/>
            <person name="Pavesi G."/>
            <person name="Pesole G."/>
            <person name="Petrovsky N."/>
            <person name="Piazza S."/>
            <person name="Reed J."/>
            <person name="Reid J.F."/>
            <person name="Ring B.Z."/>
            <person name="Ringwald M."/>
            <person name="Rost B."/>
            <person name="Ruan Y."/>
            <person name="Salzberg S.L."/>
            <person name="Sandelin A."/>
            <person name="Schneider C."/>
            <person name="Schoenbach C."/>
            <person name="Sekiguchi K."/>
            <person name="Semple C.A."/>
            <person name="Seno S."/>
            <person name="Sessa L."/>
            <person name="Sheng Y."/>
            <person name="Shibata Y."/>
            <person name="Shimada H."/>
            <person name="Shimada K."/>
            <person name="Silva D."/>
            <person name="Sinclair B."/>
            <person name="Sperling S."/>
            <person name="Stupka E."/>
            <person name="Sugiura K."/>
            <person name="Sultana R."/>
            <person name="Takenaka Y."/>
            <person name="Taki K."/>
            <person name="Tammoja K."/>
            <person name="Tan S.L."/>
            <person name="Tang S."/>
            <person name="Taylor M.S."/>
            <person name="Tegner J."/>
            <person name="Teichmann S.A."/>
            <person name="Ueda H.R."/>
            <person name="van Nimwegen E."/>
            <person name="Verardo R."/>
            <person name="Wei C.L."/>
            <person name="Yagi K."/>
            <person name="Yamanishi H."/>
            <person name="Zabarovsky E."/>
            <person name="Zhu S."/>
            <person name="Zimmer A."/>
            <person name="Hide W."/>
            <person name="Bult C."/>
            <person name="Grimmond S.M."/>
            <person name="Teasdale R.D."/>
            <person name="Liu E.T."/>
            <person name="Brusic V."/>
            <person name="Quackenbush J."/>
            <person name="Wahlestedt C."/>
            <person name="Mattick J.S."/>
            <person name="Hume D.A."/>
            <person name="Kai C."/>
            <person name="Sasaki D."/>
            <person name="Tomaru Y."/>
            <person name="Fukuda S."/>
            <person name="Kanamori-Katayama M."/>
            <person name="Suzuki M."/>
            <person name="Aoki J."/>
            <person name="Arakawa T."/>
            <person name="Iida J."/>
            <person name="Imamura K."/>
            <person name="Itoh M."/>
            <person name="Kato T."/>
            <person name="Kawaji H."/>
            <person name="Kawagashira N."/>
            <person name="Kawashima T."/>
            <person name="Kojima M."/>
            <person name="Kondo S."/>
            <person name="Konno H."/>
            <person name="Nakano K."/>
            <person name="Ninomiya N."/>
            <person name="Nishio T."/>
            <person name="Okada M."/>
            <person name="Plessy C."/>
            <person name="Shibata K."/>
            <person name="Shiraki T."/>
            <person name="Suzuki S."/>
            <person name="Tagami M."/>
            <person name="Waki K."/>
            <person name="Watahiki A."/>
            <person name="Okamura-Oho Y."/>
            <person name="Suzuki H."/>
            <person name="Kawai J."/>
            <person name="Hayashizaki Y."/>
        </authorList>
    </citation>
    <scope>NUCLEOTIDE SEQUENCE [LARGE SCALE MRNA]</scope>
</reference>
<reference key="3">
    <citation type="journal article" date="2009" name="PLoS Biol.">
        <title>Lineage-specific biology revealed by a finished genome assembly of the mouse.</title>
        <authorList>
            <person name="Church D.M."/>
            <person name="Goodstadt L."/>
            <person name="Hillier L.W."/>
            <person name="Zody M.C."/>
            <person name="Goldstein S."/>
            <person name="She X."/>
            <person name="Bult C.J."/>
            <person name="Agarwala R."/>
            <person name="Cherry J.L."/>
            <person name="DiCuccio M."/>
            <person name="Hlavina W."/>
            <person name="Kapustin Y."/>
            <person name="Meric P."/>
            <person name="Maglott D."/>
            <person name="Birtle Z."/>
            <person name="Marques A.C."/>
            <person name="Graves T."/>
            <person name="Zhou S."/>
            <person name="Teague B."/>
            <person name="Potamousis K."/>
            <person name="Churas C."/>
            <person name="Place M."/>
            <person name="Herschleb J."/>
            <person name="Runnheim R."/>
            <person name="Forrest D."/>
            <person name="Amos-Landgraf J."/>
            <person name="Schwartz D.C."/>
            <person name="Cheng Z."/>
            <person name="Lindblad-Toh K."/>
            <person name="Eichler E.E."/>
            <person name="Ponting C.P."/>
        </authorList>
    </citation>
    <scope>NUCLEOTIDE SEQUENCE [LARGE SCALE GENOMIC DNA]</scope>
    <source>
        <strain>C57BL/6J</strain>
    </source>
</reference>
<reference key="4">
    <citation type="submission" date="2005-07" db="EMBL/GenBank/DDBJ databases">
        <authorList>
            <person name="Mural R.J."/>
            <person name="Adams M.D."/>
            <person name="Myers E.W."/>
            <person name="Smith H.O."/>
            <person name="Venter J.C."/>
        </authorList>
    </citation>
    <scope>NUCLEOTIDE SEQUENCE [LARGE SCALE GENOMIC DNA]</scope>
</reference>
<reference key="5">
    <citation type="journal article" date="2004" name="Genome Res.">
        <title>The status, quality, and expansion of the NIH full-length cDNA project: the Mammalian Gene Collection (MGC).</title>
        <authorList>
            <consortium name="The MGC Project Team"/>
        </authorList>
    </citation>
    <scope>NUCLEOTIDE SEQUENCE [LARGE SCALE MRNA]</scope>
</reference>
<reference key="6">
    <citation type="journal article" date="2010" name="Cell">
        <title>A tissue-specific atlas of mouse protein phosphorylation and expression.</title>
        <authorList>
            <person name="Huttlin E.L."/>
            <person name="Jedrychowski M.P."/>
            <person name="Elias J.E."/>
            <person name="Goswami T."/>
            <person name="Rad R."/>
            <person name="Beausoleil S.A."/>
            <person name="Villen J."/>
            <person name="Haas W."/>
            <person name="Sowa M.E."/>
            <person name="Gygi S.P."/>
        </authorList>
    </citation>
    <scope>IDENTIFICATION BY MASS SPECTROMETRY [LARGE SCALE ANALYSIS]</scope>
    <source>
        <tissue>Heart</tissue>
        <tissue>Lung</tissue>
        <tissue>Pancreas</tissue>
        <tissue>Spleen</tissue>
        <tissue>Testis</tissue>
    </source>
</reference>
<reference key="7">
    <citation type="journal article" date="2010" name="Hum. Mol. Genet.">
        <title>Relative tissue expression of homologous torsinB correlates with the neuronal specific importance of DYT1 dystonia-associated torsinA.</title>
        <authorList>
            <person name="Jungwirth M."/>
            <person name="Dear M.L."/>
            <person name="Brown P."/>
            <person name="Holbrook K."/>
            <person name="Goodchild R."/>
        </authorList>
    </citation>
    <scope>TISSUE SPECIFICITY</scope>
    <scope>SUBCELLULAR LOCATION</scope>
    <scope>GLYCOSYLATION</scope>
    <scope>DEVELOPMENTAL STAGE</scope>
</reference>
<reference key="8">
    <citation type="journal article" date="2010" name="Proc. Natl. Acad. Sci. U.S.A.">
        <title>A molecular mechanism underlying the neural-specific defect in torsinA mutant mice.</title>
        <authorList>
            <person name="Kim C.E."/>
            <person name="Perez A."/>
            <person name="Perkins G."/>
            <person name="Ellisman M.H."/>
            <person name="Dauer W.T."/>
        </authorList>
    </citation>
    <scope>FUNCTION IN NUCLEAR ENVELOPE INTEGRITY</scope>
    <scope>DEVELOPMENTAL STAGE</scope>
    <scope>INTERACTION WITH TOR1AIP1</scope>
    <scope>SUBCELLULAR LOCATION</scope>
</reference>
<evidence type="ECO:0000250" key="1"/>
<evidence type="ECO:0000255" key="2"/>
<evidence type="ECO:0000269" key="3">
    <source>
    </source>
</evidence>
<evidence type="ECO:0000269" key="4">
    <source>
    </source>
</evidence>
<evidence type="ECO:0000305" key="5"/>
<name>TOR1B_MOUSE</name>
<keyword id="KW-0067">ATP-binding</keyword>
<keyword id="KW-0143">Chaperone</keyword>
<keyword id="KW-0256">Endoplasmic reticulum</keyword>
<keyword id="KW-0325">Glycoprotein</keyword>
<keyword id="KW-0378">Hydrolase</keyword>
<keyword id="KW-0472">Membrane</keyword>
<keyword id="KW-0547">Nucleotide-binding</keyword>
<keyword id="KW-0539">Nucleus</keyword>
<keyword id="KW-1185">Reference proteome</keyword>
<keyword id="KW-0732">Signal</keyword>
<sequence>MRRIGAFGGSTALWALLAAHVAGAFEPVSVGIAIGAVSALTGYLSYTDFYCRFTECCHEERPLNTSALKLDLEEKLFGQHLATEVILKALTGFRNNKNSKKPLTLSLHGWAGTGKNFISQIVAENLYPKGLKSNFVHLFVSTLHFPHEQKIKVYQDQLQKWIRGNVSACGSSVFIFDEMDKLHPGIIDAIKPFLDYYEQVDGISYRRAIFIFLSNAGGDLITKTALDFWRAGRKREEIQLKDLEPVLSVGVFNNKHSGLWHSGLIDKNLIDYFIPFLPLEYKHVKMCVRAEMRARGAAVDEDVVTSVADEMTFFPKDEKIYSDKGCKTVQSRLDFH</sequence>
<feature type="signal peptide" evidence="2">
    <location>
        <begin position="1"/>
        <end position="24"/>
    </location>
</feature>
<feature type="chain" id="PRO_0000005510" description="Torsin-1B">
    <location>
        <begin position="25"/>
        <end position="336"/>
    </location>
</feature>
<feature type="binding site" evidence="2">
    <location>
        <begin position="109"/>
        <end position="116"/>
    </location>
    <ligand>
        <name>ATP</name>
        <dbReference type="ChEBI" id="CHEBI:30616"/>
    </ligand>
</feature>
<feature type="glycosylation site" description="N-linked (GlcNAc...) asparagine" evidence="2">
    <location>
        <position position="64"/>
    </location>
</feature>
<feature type="glycosylation site" description="N-linked (GlcNAc...) asparagine" evidence="1">
    <location>
        <position position="165"/>
    </location>
</feature>
<feature type="sequence conflict" description="In Ref. 1; CAC12814." evidence="5" ref="1">
    <original>I</original>
    <variation>D</variation>
    <location>
        <position position="238"/>
    </location>
</feature>
<feature type="sequence conflict" description="In Ref. 1; CAC12814." evidence="5" ref="1">
    <original>LEP</original>
    <variation>MEH</variation>
    <location>
        <begin position="243"/>
        <end position="245"/>
    </location>
</feature>
<organism>
    <name type="scientific">Mus musculus</name>
    <name type="common">Mouse</name>
    <dbReference type="NCBI Taxonomy" id="10090"/>
    <lineage>
        <taxon>Eukaryota</taxon>
        <taxon>Metazoa</taxon>
        <taxon>Chordata</taxon>
        <taxon>Craniata</taxon>
        <taxon>Vertebrata</taxon>
        <taxon>Euteleostomi</taxon>
        <taxon>Mammalia</taxon>
        <taxon>Eutheria</taxon>
        <taxon>Euarchontoglires</taxon>
        <taxon>Glires</taxon>
        <taxon>Rodentia</taxon>
        <taxon>Myomorpha</taxon>
        <taxon>Muroidea</taxon>
        <taxon>Muridae</taxon>
        <taxon>Murinae</taxon>
        <taxon>Mus</taxon>
        <taxon>Mus</taxon>
    </lineage>
</organism>
<comment type="function">
    <text evidence="4">May serve as a molecular chaperone assisting in the proper folding of secreted and/or membrane proteins. Plays a role in non-neural cells nuclear envelope and endoplasmic reticulum integrity. May have a redundant function with TOR1A in non-neural tissues.</text>
</comment>
<comment type="catalytic activity">
    <reaction>
        <text>ATP + H2O = ADP + phosphate + H(+)</text>
        <dbReference type="Rhea" id="RHEA:13065"/>
        <dbReference type="ChEBI" id="CHEBI:15377"/>
        <dbReference type="ChEBI" id="CHEBI:15378"/>
        <dbReference type="ChEBI" id="CHEBI:30616"/>
        <dbReference type="ChEBI" id="CHEBI:43474"/>
        <dbReference type="ChEBI" id="CHEBI:456216"/>
    </reaction>
</comment>
<comment type="subunit">
    <text evidence="4">Homohexamer. Interacts with TOR1A; the interaction may be specific of neural tissues. Interacts with TOR1AIP1; TOR1AIP1 is required for TOR1B location on the nuclear membrane. Interacts (ATP-bound) with TOR1AIP2; important for endoplasmic reticulum integrity.</text>
</comment>
<comment type="subcellular location">
    <subcellularLocation>
        <location>Endoplasmic reticulum lumen</location>
    </subcellularLocation>
    <subcellularLocation>
        <location>Nucleus membrane</location>
    </subcellularLocation>
</comment>
<comment type="tissue specificity">
    <text evidence="3">Highly expressed in liver and muscle; lower expression levels are observed in brain (at protein level).</text>
</comment>
<comment type="developmental stage">
    <text evidence="3 4">At 16 dpc and 18 dpc, widely expressed with higher expression levels in non-neural cells and hippocampus (at protein level).</text>
</comment>
<comment type="PTM">
    <text evidence="3">N-glycosylated.</text>
</comment>
<comment type="similarity">
    <text evidence="5">Belongs to the ClpA/ClpB family. Torsin subfamily.</text>
</comment>
<accession>Q9ER41</accession>
<accession>Q8VEI4</accession>
<proteinExistence type="evidence at protein level"/>
<dbReference type="EC" id="3.6.4.-"/>
<dbReference type="EMBL" id="AJ297743">
    <property type="protein sequence ID" value="CAC12814.1"/>
    <property type="molecule type" value="mRNA"/>
</dbReference>
<dbReference type="EMBL" id="AK149754">
    <property type="protein sequence ID" value="BAE29062.1"/>
    <property type="molecule type" value="mRNA"/>
</dbReference>
<dbReference type="EMBL" id="AK159843">
    <property type="protein sequence ID" value="BAE35421.1"/>
    <property type="molecule type" value="mRNA"/>
</dbReference>
<dbReference type="EMBL" id="AL844532">
    <property type="status" value="NOT_ANNOTATED_CDS"/>
    <property type="molecule type" value="Genomic_DNA"/>
</dbReference>
<dbReference type="EMBL" id="CH466542">
    <property type="protein sequence ID" value="EDL08496.1"/>
    <property type="molecule type" value="Genomic_DNA"/>
</dbReference>
<dbReference type="EMBL" id="BC018456">
    <property type="protein sequence ID" value="AAH18456.1"/>
    <property type="molecule type" value="mRNA"/>
</dbReference>
<dbReference type="CCDS" id="CCDS15890.1"/>
<dbReference type="RefSeq" id="NP_598434.2">
    <property type="nucleotide sequence ID" value="NM_133673.3"/>
</dbReference>
<dbReference type="SMR" id="Q9ER41"/>
<dbReference type="BioGRID" id="206011">
    <property type="interactions" value="1"/>
</dbReference>
<dbReference type="FunCoup" id="Q9ER41">
    <property type="interactions" value="3720"/>
</dbReference>
<dbReference type="STRING" id="10090.ENSMUSP00000028199"/>
<dbReference type="GlyConnect" id="2774">
    <property type="glycosylation" value="4 N-Linked glycans (1 site)"/>
</dbReference>
<dbReference type="GlyCosmos" id="Q9ER41">
    <property type="glycosylation" value="2 sites, 4 glycans"/>
</dbReference>
<dbReference type="GlyGen" id="Q9ER41">
    <property type="glycosylation" value="2 sites, 5 N-linked glycans (2 sites)"/>
</dbReference>
<dbReference type="iPTMnet" id="Q9ER41"/>
<dbReference type="PhosphoSitePlus" id="Q9ER41"/>
<dbReference type="jPOST" id="Q9ER41"/>
<dbReference type="PaxDb" id="10090-ENSMUSP00000028199"/>
<dbReference type="PeptideAtlas" id="Q9ER41"/>
<dbReference type="ProteomicsDB" id="258953"/>
<dbReference type="Pumba" id="Q9ER41"/>
<dbReference type="Antibodypedia" id="17905">
    <property type="antibodies" value="178 antibodies from 20 providers"/>
</dbReference>
<dbReference type="DNASU" id="30934"/>
<dbReference type="Ensembl" id="ENSMUST00000028199.12">
    <property type="protein sequence ID" value="ENSMUSP00000028199.6"/>
    <property type="gene ID" value="ENSMUSG00000026848.15"/>
</dbReference>
<dbReference type="GeneID" id="30934"/>
<dbReference type="KEGG" id="mmu:30934"/>
<dbReference type="UCSC" id="uc008jda.1">
    <property type="organism name" value="mouse"/>
</dbReference>
<dbReference type="AGR" id="MGI:1353605"/>
<dbReference type="CTD" id="27348"/>
<dbReference type="MGI" id="MGI:1353605">
    <property type="gene designation" value="Tor1b"/>
</dbReference>
<dbReference type="VEuPathDB" id="HostDB:ENSMUSG00000026848"/>
<dbReference type="eggNOG" id="KOG2170">
    <property type="taxonomic scope" value="Eukaryota"/>
</dbReference>
<dbReference type="GeneTree" id="ENSGT00950000182888"/>
<dbReference type="HOGENOM" id="CLU_053537_0_0_1"/>
<dbReference type="InParanoid" id="Q9ER41"/>
<dbReference type="OMA" id="ECCDDRS"/>
<dbReference type="OrthoDB" id="19623at2759"/>
<dbReference type="PhylomeDB" id="Q9ER41"/>
<dbReference type="TreeFam" id="TF314941"/>
<dbReference type="Reactome" id="R-MMU-8856825">
    <property type="pathway name" value="Cargo recognition for clathrin-mediated endocytosis"/>
</dbReference>
<dbReference type="BioGRID-ORCS" id="30934">
    <property type="hits" value="2 hits in 78 CRISPR screens"/>
</dbReference>
<dbReference type="ChiTaRS" id="Tor1b">
    <property type="organism name" value="mouse"/>
</dbReference>
<dbReference type="PRO" id="PR:Q9ER41"/>
<dbReference type="Proteomes" id="UP000000589">
    <property type="component" value="Chromosome 2"/>
</dbReference>
<dbReference type="RNAct" id="Q9ER41">
    <property type="molecule type" value="protein"/>
</dbReference>
<dbReference type="Bgee" id="ENSMUSG00000026848">
    <property type="expression patterns" value="Expressed in rostral migratory stream and 264 other cell types or tissues"/>
</dbReference>
<dbReference type="ExpressionAtlas" id="Q9ER41">
    <property type="expression patterns" value="baseline and differential"/>
</dbReference>
<dbReference type="GO" id="GO:0005737">
    <property type="term" value="C:cytoplasm"/>
    <property type="evidence" value="ECO:0000314"/>
    <property type="project" value="MGI"/>
</dbReference>
<dbReference type="GO" id="GO:0005783">
    <property type="term" value="C:endoplasmic reticulum"/>
    <property type="evidence" value="ECO:0000250"/>
    <property type="project" value="UniProtKB"/>
</dbReference>
<dbReference type="GO" id="GO:0005788">
    <property type="term" value="C:endoplasmic reticulum lumen"/>
    <property type="evidence" value="ECO:0000314"/>
    <property type="project" value="MGI"/>
</dbReference>
<dbReference type="GO" id="GO:0005635">
    <property type="term" value="C:nuclear envelope"/>
    <property type="evidence" value="ECO:0000314"/>
    <property type="project" value="MGI"/>
</dbReference>
<dbReference type="GO" id="GO:0031965">
    <property type="term" value="C:nuclear membrane"/>
    <property type="evidence" value="ECO:0007669"/>
    <property type="project" value="UniProtKB-SubCell"/>
</dbReference>
<dbReference type="GO" id="GO:0005524">
    <property type="term" value="F:ATP binding"/>
    <property type="evidence" value="ECO:0007669"/>
    <property type="project" value="UniProtKB-KW"/>
</dbReference>
<dbReference type="GO" id="GO:0016887">
    <property type="term" value="F:ATP hydrolysis activity"/>
    <property type="evidence" value="ECO:0000250"/>
    <property type="project" value="UniProtKB"/>
</dbReference>
<dbReference type="GO" id="GO:0042802">
    <property type="term" value="F:identical protein binding"/>
    <property type="evidence" value="ECO:0000353"/>
    <property type="project" value="MGI"/>
</dbReference>
<dbReference type="GO" id="GO:0051085">
    <property type="term" value="P:chaperone cofactor-dependent protein refolding"/>
    <property type="evidence" value="ECO:0007669"/>
    <property type="project" value="InterPro"/>
</dbReference>
<dbReference type="GO" id="GO:0007029">
    <property type="term" value="P:endoplasmic reticulum organization"/>
    <property type="evidence" value="ECO:0000250"/>
    <property type="project" value="UniProtKB"/>
</dbReference>
<dbReference type="GO" id="GO:0071763">
    <property type="term" value="P:nuclear membrane organization"/>
    <property type="evidence" value="ECO:0000316"/>
    <property type="project" value="MGI"/>
</dbReference>
<dbReference type="FunFam" id="3.40.50.300:FF:000743">
    <property type="entry name" value="Torsin"/>
    <property type="match status" value="1"/>
</dbReference>
<dbReference type="Gene3D" id="3.40.50.300">
    <property type="entry name" value="P-loop containing nucleotide triphosphate hydrolases"/>
    <property type="match status" value="1"/>
</dbReference>
<dbReference type="InterPro" id="IPR003593">
    <property type="entry name" value="AAA+_ATPase"/>
</dbReference>
<dbReference type="InterPro" id="IPR027417">
    <property type="entry name" value="P-loop_NTPase"/>
</dbReference>
<dbReference type="InterPro" id="IPR049337">
    <property type="entry name" value="TOR1A_C"/>
</dbReference>
<dbReference type="InterPro" id="IPR010448">
    <property type="entry name" value="Torsin"/>
</dbReference>
<dbReference type="InterPro" id="IPR017378">
    <property type="entry name" value="Torsin_1/2"/>
</dbReference>
<dbReference type="PANTHER" id="PTHR10760">
    <property type="entry name" value="TORSIN"/>
    <property type="match status" value="1"/>
</dbReference>
<dbReference type="PANTHER" id="PTHR10760:SF14">
    <property type="entry name" value="TORSIN-1B"/>
    <property type="match status" value="1"/>
</dbReference>
<dbReference type="Pfam" id="PF21376">
    <property type="entry name" value="TOR1A_C"/>
    <property type="match status" value="1"/>
</dbReference>
<dbReference type="Pfam" id="PF06309">
    <property type="entry name" value="Torsin"/>
    <property type="match status" value="1"/>
</dbReference>
<dbReference type="PIRSF" id="PIRSF038079">
    <property type="entry name" value="Torsin_2A"/>
    <property type="match status" value="1"/>
</dbReference>
<dbReference type="SMART" id="SM00382">
    <property type="entry name" value="AAA"/>
    <property type="match status" value="1"/>
</dbReference>
<dbReference type="SUPFAM" id="SSF52540">
    <property type="entry name" value="P-loop containing nucleoside triphosphate hydrolases"/>
    <property type="match status" value="1"/>
</dbReference>